<accession>Q8G816</accession>
<keyword id="KW-0028">Amino-acid biosynthesis</keyword>
<keyword id="KW-0055">Arginine biosynthesis</keyword>
<keyword id="KW-0067">ATP-binding</keyword>
<keyword id="KW-0315">Glutamine amidotransferase</keyword>
<keyword id="KW-0436">Ligase</keyword>
<keyword id="KW-0547">Nucleotide-binding</keyword>
<keyword id="KW-0665">Pyrimidine biosynthesis</keyword>
<keyword id="KW-1185">Reference proteome</keyword>
<feature type="chain" id="PRO_0000112257" description="Carbamoyl phosphate synthase small chain">
    <location>
        <begin position="1"/>
        <end position="407"/>
    </location>
</feature>
<feature type="domain" description="Glutamine amidotransferase type-1" evidence="1">
    <location>
        <begin position="207"/>
        <end position="405"/>
    </location>
</feature>
<feature type="region of interest" description="CPSase" evidence="1">
    <location>
        <begin position="1"/>
        <end position="203"/>
    </location>
</feature>
<feature type="active site" description="Nucleophile" evidence="1">
    <location>
        <position position="283"/>
    </location>
</feature>
<feature type="active site" evidence="1">
    <location>
        <position position="378"/>
    </location>
</feature>
<feature type="active site" evidence="1">
    <location>
        <position position="380"/>
    </location>
</feature>
<feature type="binding site" evidence="1">
    <location>
        <position position="61"/>
    </location>
    <ligand>
        <name>L-glutamine</name>
        <dbReference type="ChEBI" id="CHEBI:58359"/>
    </ligand>
</feature>
<feature type="binding site" evidence="1">
    <location>
        <position position="255"/>
    </location>
    <ligand>
        <name>L-glutamine</name>
        <dbReference type="ChEBI" id="CHEBI:58359"/>
    </ligand>
</feature>
<feature type="binding site" evidence="1">
    <location>
        <position position="257"/>
    </location>
    <ligand>
        <name>L-glutamine</name>
        <dbReference type="ChEBI" id="CHEBI:58359"/>
    </ligand>
</feature>
<feature type="binding site" evidence="1">
    <location>
        <position position="284"/>
    </location>
    <ligand>
        <name>L-glutamine</name>
        <dbReference type="ChEBI" id="CHEBI:58359"/>
    </ligand>
</feature>
<feature type="binding site" evidence="1">
    <location>
        <position position="287"/>
    </location>
    <ligand>
        <name>L-glutamine</name>
        <dbReference type="ChEBI" id="CHEBI:58359"/>
    </ligand>
</feature>
<feature type="binding site" evidence="1">
    <location>
        <position position="325"/>
    </location>
    <ligand>
        <name>L-glutamine</name>
        <dbReference type="ChEBI" id="CHEBI:58359"/>
    </ligand>
</feature>
<feature type="binding site" evidence="1">
    <location>
        <position position="327"/>
    </location>
    <ligand>
        <name>L-glutamine</name>
        <dbReference type="ChEBI" id="CHEBI:58359"/>
    </ligand>
</feature>
<feature type="binding site" evidence="1">
    <location>
        <position position="328"/>
    </location>
    <ligand>
        <name>L-glutamine</name>
        <dbReference type="ChEBI" id="CHEBI:58359"/>
    </ligand>
</feature>
<protein>
    <recommendedName>
        <fullName evidence="1">Carbamoyl phosphate synthase small chain</fullName>
        <ecNumber evidence="1">6.3.5.5</ecNumber>
    </recommendedName>
    <alternativeName>
        <fullName evidence="1">Carbamoyl phosphate synthetase glutamine chain</fullName>
    </alternativeName>
</protein>
<comment type="function">
    <text evidence="1">Small subunit of the glutamine-dependent carbamoyl phosphate synthetase (CPSase). CPSase catalyzes the formation of carbamoyl phosphate from the ammonia moiety of glutamine, carbonate, and phosphate donated by ATP, constituting the first step of 2 biosynthetic pathways, one leading to arginine and/or urea and the other to pyrimidine nucleotides. The small subunit (glutamine amidotransferase) binds and cleaves glutamine to supply the large subunit with the substrate ammonia.</text>
</comment>
<comment type="catalytic activity">
    <reaction evidence="1">
        <text>hydrogencarbonate + L-glutamine + 2 ATP + H2O = carbamoyl phosphate + L-glutamate + 2 ADP + phosphate + 2 H(+)</text>
        <dbReference type="Rhea" id="RHEA:18633"/>
        <dbReference type="ChEBI" id="CHEBI:15377"/>
        <dbReference type="ChEBI" id="CHEBI:15378"/>
        <dbReference type="ChEBI" id="CHEBI:17544"/>
        <dbReference type="ChEBI" id="CHEBI:29985"/>
        <dbReference type="ChEBI" id="CHEBI:30616"/>
        <dbReference type="ChEBI" id="CHEBI:43474"/>
        <dbReference type="ChEBI" id="CHEBI:58228"/>
        <dbReference type="ChEBI" id="CHEBI:58359"/>
        <dbReference type="ChEBI" id="CHEBI:456216"/>
        <dbReference type="EC" id="6.3.5.5"/>
    </reaction>
</comment>
<comment type="catalytic activity">
    <molecule>Carbamoyl phosphate synthase small chain</molecule>
    <reaction evidence="1">
        <text>L-glutamine + H2O = L-glutamate + NH4(+)</text>
        <dbReference type="Rhea" id="RHEA:15889"/>
        <dbReference type="ChEBI" id="CHEBI:15377"/>
        <dbReference type="ChEBI" id="CHEBI:28938"/>
        <dbReference type="ChEBI" id="CHEBI:29985"/>
        <dbReference type="ChEBI" id="CHEBI:58359"/>
    </reaction>
</comment>
<comment type="pathway">
    <text evidence="1">Amino-acid biosynthesis; L-arginine biosynthesis; carbamoyl phosphate from bicarbonate: step 1/1.</text>
</comment>
<comment type="pathway">
    <text evidence="1">Pyrimidine metabolism; UMP biosynthesis via de novo pathway; (S)-dihydroorotate from bicarbonate: step 1/3.</text>
</comment>
<comment type="subunit">
    <text evidence="1">Composed of two chains; the small (or glutamine) chain promotes the hydrolysis of glutamine to ammonia, which is used by the large (or ammonia) chain to synthesize carbamoyl phosphate. Tetramer of heterodimers (alpha,beta)4.</text>
</comment>
<comment type="similarity">
    <text evidence="1">Belongs to the CarA family.</text>
</comment>
<sequence length="407" mass="44265">MSQNESGTIAIPMYDKDDAVLVLEDGQVYVGKPYGALGETTGEIVFATGMTGYQETLTDPSYDRQIVVQTFPHIGDTGVNSEDPESSRIWVAGYIVRDPSPNVSNWRAEGSLDDDLAKNGIVGLSHIDTRKLVRHLRSAGVMRAGIFSGDALTDQATGALKTIEQLLEDVKNTPQMQGLSLYDEVSTKETYTIEPCGEYEGKEPLYTVAAVDLGIKGMTPHRMAERGCRVHVVPSTITFAEIENLNPDGVFFSNGPGDPEQAGPEIELLRQVLDAGYPFFGICFGNQLLGRALGFGTYKLKFGHRGINQPVKDLTTGKVEVTAHNHGFAVDAPIGKQVDAPFENGKYGKVFVSHIDLNDDVVEGLQCVDIPAFSVQYHPEAAAGPHDAAYLFDRFCELMKNNSKEGK</sequence>
<reference key="1">
    <citation type="journal article" date="2002" name="Proc. Natl. Acad. Sci. U.S.A.">
        <title>The genome sequence of Bifidobacterium longum reflects its adaptation to the human gastrointestinal tract.</title>
        <authorList>
            <person name="Schell M.A."/>
            <person name="Karmirantzou M."/>
            <person name="Snel B."/>
            <person name="Vilanova D."/>
            <person name="Berger B."/>
            <person name="Pessi G."/>
            <person name="Zwahlen M.-C."/>
            <person name="Desiere F."/>
            <person name="Bork P."/>
            <person name="Delley M."/>
            <person name="Pridmore R.D."/>
            <person name="Arigoni F."/>
        </authorList>
    </citation>
    <scope>NUCLEOTIDE SEQUENCE [LARGE SCALE GENOMIC DNA]</scope>
    <source>
        <strain>NCC 2705</strain>
    </source>
</reference>
<dbReference type="EC" id="6.3.5.5" evidence="1"/>
<dbReference type="EMBL" id="AE014295">
    <property type="protein sequence ID" value="AAN23933.1"/>
    <property type="molecule type" value="Genomic_DNA"/>
</dbReference>
<dbReference type="RefSeq" id="NP_695297.1">
    <property type="nucleotide sequence ID" value="NC_004307.2"/>
</dbReference>
<dbReference type="SMR" id="Q8G816"/>
<dbReference type="STRING" id="206672.BL0067"/>
<dbReference type="EnsemblBacteria" id="AAN23933">
    <property type="protein sequence ID" value="AAN23933"/>
    <property type="gene ID" value="BL0067"/>
</dbReference>
<dbReference type="KEGG" id="blo:BL0067"/>
<dbReference type="PATRIC" id="fig|206672.9.peg.73"/>
<dbReference type="HOGENOM" id="CLU_035901_2_1_11"/>
<dbReference type="OrthoDB" id="9804328at2"/>
<dbReference type="PhylomeDB" id="Q8G816"/>
<dbReference type="UniPathway" id="UPA00068">
    <property type="reaction ID" value="UER00171"/>
</dbReference>
<dbReference type="UniPathway" id="UPA00070">
    <property type="reaction ID" value="UER00115"/>
</dbReference>
<dbReference type="Proteomes" id="UP000000439">
    <property type="component" value="Chromosome"/>
</dbReference>
<dbReference type="GO" id="GO:0005524">
    <property type="term" value="F:ATP binding"/>
    <property type="evidence" value="ECO:0007669"/>
    <property type="project" value="UniProtKB-UniRule"/>
</dbReference>
<dbReference type="GO" id="GO:0004088">
    <property type="term" value="F:carbamoyl-phosphate synthase (glutamine-hydrolyzing) activity"/>
    <property type="evidence" value="ECO:0007669"/>
    <property type="project" value="UniProtKB-UniRule"/>
</dbReference>
<dbReference type="GO" id="GO:0004359">
    <property type="term" value="F:glutaminase activity"/>
    <property type="evidence" value="ECO:0007669"/>
    <property type="project" value="RHEA"/>
</dbReference>
<dbReference type="GO" id="GO:0006207">
    <property type="term" value="P:'de novo' pyrimidine nucleobase biosynthetic process"/>
    <property type="evidence" value="ECO:0007669"/>
    <property type="project" value="InterPro"/>
</dbReference>
<dbReference type="GO" id="GO:0044205">
    <property type="term" value="P:'de novo' UMP biosynthetic process"/>
    <property type="evidence" value="ECO:0007669"/>
    <property type="project" value="UniProtKB-UniRule"/>
</dbReference>
<dbReference type="GO" id="GO:0006541">
    <property type="term" value="P:glutamine metabolic process"/>
    <property type="evidence" value="ECO:0007669"/>
    <property type="project" value="InterPro"/>
</dbReference>
<dbReference type="GO" id="GO:0006526">
    <property type="term" value="P:L-arginine biosynthetic process"/>
    <property type="evidence" value="ECO:0007669"/>
    <property type="project" value="UniProtKB-UniRule"/>
</dbReference>
<dbReference type="CDD" id="cd01744">
    <property type="entry name" value="GATase1_CPSase"/>
    <property type="match status" value="1"/>
</dbReference>
<dbReference type="FunFam" id="3.50.30.20:FF:000001">
    <property type="entry name" value="Carbamoyl-phosphate synthase small chain"/>
    <property type="match status" value="1"/>
</dbReference>
<dbReference type="Gene3D" id="3.40.50.880">
    <property type="match status" value="1"/>
</dbReference>
<dbReference type="Gene3D" id="3.50.30.20">
    <property type="entry name" value="Carbamoyl-phosphate synthase small subunit, N-terminal domain"/>
    <property type="match status" value="1"/>
</dbReference>
<dbReference type="HAMAP" id="MF_01209">
    <property type="entry name" value="CPSase_S_chain"/>
    <property type="match status" value="1"/>
</dbReference>
<dbReference type="InterPro" id="IPR050472">
    <property type="entry name" value="Anth_synth/Amidotransfase"/>
</dbReference>
<dbReference type="InterPro" id="IPR006274">
    <property type="entry name" value="CarbamoylP_synth_ssu"/>
</dbReference>
<dbReference type="InterPro" id="IPR002474">
    <property type="entry name" value="CarbamoylP_synth_ssu_N"/>
</dbReference>
<dbReference type="InterPro" id="IPR036480">
    <property type="entry name" value="CarbP_synth_ssu_N_sf"/>
</dbReference>
<dbReference type="InterPro" id="IPR029062">
    <property type="entry name" value="Class_I_gatase-like"/>
</dbReference>
<dbReference type="InterPro" id="IPR035686">
    <property type="entry name" value="CPSase_GATase1"/>
</dbReference>
<dbReference type="InterPro" id="IPR017926">
    <property type="entry name" value="GATASE"/>
</dbReference>
<dbReference type="NCBIfam" id="TIGR01368">
    <property type="entry name" value="CPSaseIIsmall"/>
    <property type="match status" value="1"/>
</dbReference>
<dbReference type="NCBIfam" id="NF009475">
    <property type="entry name" value="PRK12838.1"/>
    <property type="match status" value="1"/>
</dbReference>
<dbReference type="PANTHER" id="PTHR43418:SF7">
    <property type="entry name" value="CARBAMOYL-PHOSPHATE SYNTHASE SMALL CHAIN"/>
    <property type="match status" value="1"/>
</dbReference>
<dbReference type="PANTHER" id="PTHR43418">
    <property type="entry name" value="MULTIFUNCTIONAL TRYPTOPHAN BIOSYNTHESIS PROTEIN-RELATED"/>
    <property type="match status" value="1"/>
</dbReference>
<dbReference type="Pfam" id="PF00988">
    <property type="entry name" value="CPSase_sm_chain"/>
    <property type="match status" value="1"/>
</dbReference>
<dbReference type="Pfam" id="PF00117">
    <property type="entry name" value="GATase"/>
    <property type="match status" value="1"/>
</dbReference>
<dbReference type="PRINTS" id="PR00097">
    <property type="entry name" value="ANTSNTHASEII"/>
</dbReference>
<dbReference type="PRINTS" id="PR00099">
    <property type="entry name" value="CPSGATASE"/>
</dbReference>
<dbReference type="PRINTS" id="PR00096">
    <property type="entry name" value="GATASE"/>
</dbReference>
<dbReference type="SMART" id="SM01097">
    <property type="entry name" value="CPSase_sm_chain"/>
    <property type="match status" value="1"/>
</dbReference>
<dbReference type="SUPFAM" id="SSF52021">
    <property type="entry name" value="Carbamoyl phosphate synthetase, small subunit N-terminal domain"/>
    <property type="match status" value="1"/>
</dbReference>
<dbReference type="SUPFAM" id="SSF52317">
    <property type="entry name" value="Class I glutamine amidotransferase-like"/>
    <property type="match status" value="1"/>
</dbReference>
<dbReference type="PROSITE" id="PS51273">
    <property type="entry name" value="GATASE_TYPE_1"/>
    <property type="match status" value="1"/>
</dbReference>
<proteinExistence type="inferred from homology"/>
<evidence type="ECO:0000255" key="1">
    <source>
        <dbReference type="HAMAP-Rule" id="MF_01209"/>
    </source>
</evidence>
<organism>
    <name type="scientific">Bifidobacterium longum (strain NCC 2705)</name>
    <dbReference type="NCBI Taxonomy" id="206672"/>
    <lineage>
        <taxon>Bacteria</taxon>
        <taxon>Bacillati</taxon>
        <taxon>Actinomycetota</taxon>
        <taxon>Actinomycetes</taxon>
        <taxon>Bifidobacteriales</taxon>
        <taxon>Bifidobacteriaceae</taxon>
        <taxon>Bifidobacterium</taxon>
    </lineage>
</organism>
<name>CARA_BIFLO</name>
<gene>
    <name evidence="1" type="primary">carA</name>
    <name type="ordered locus">BL0067</name>
</gene>